<comment type="function">
    <text evidence="2 3">Stress-activated, pro-apoptotic kinase which, following caspase-cleavage, enters the nucleus and induces chromatin condensation followed by internucleosomal DNA fragmentation. Key component of the Hippo signaling pathway which plays a pivotal role in organ size control and tumor suppression by restricting proliferation and promoting apoptosis. The core of this pathway is composed of a kinase cascade wherein STK3/MST2 and STK4/MST1, in complex with its regulatory protein SAV1, phosphorylates and activates LATS1/2 in complex with its regulatory protein MOB1, which in turn phosphorylates and inactivates YAP1 oncoprotein and WWTR1/TAZ. Phosphorylation of YAP1 by LATS2 inhibits its translocation into the nucleus to regulate cellular genes important for cell proliferation, cell death, and cell migration. Phosphorylates 'Ser-14' of histone H2B (H2BS14ph) during apoptosis. Phosphorylates FOXO3 upon oxidative stress, which results in its nuclear translocation and cell death initiation.</text>
</comment>
<comment type="catalytic activity">
    <reaction evidence="2">
        <text>L-seryl-[protein] + ATP = O-phospho-L-seryl-[protein] + ADP + H(+)</text>
        <dbReference type="Rhea" id="RHEA:17989"/>
        <dbReference type="Rhea" id="RHEA-COMP:9863"/>
        <dbReference type="Rhea" id="RHEA-COMP:11604"/>
        <dbReference type="ChEBI" id="CHEBI:15378"/>
        <dbReference type="ChEBI" id="CHEBI:29999"/>
        <dbReference type="ChEBI" id="CHEBI:30616"/>
        <dbReference type="ChEBI" id="CHEBI:83421"/>
        <dbReference type="ChEBI" id="CHEBI:456216"/>
        <dbReference type="EC" id="2.7.11.1"/>
    </reaction>
    <physiologicalReaction direction="left-to-right" evidence="2">
        <dbReference type="Rhea" id="RHEA:17990"/>
    </physiologicalReaction>
</comment>
<comment type="catalytic activity">
    <reaction evidence="2">
        <text>L-threonyl-[protein] + ATP = O-phospho-L-threonyl-[protein] + ADP + H(+)</text>
        <dbReference type="Rhea" id="RHEA:46608"/>
        <dbReference type="Rhea" id="RHEA-COMP:11060"/>
        <dbReference type="Rhea" id="RHEA-COMP:11605"/>
        <dbReference type="ChEBI" id="CHEBI:15378"/>
        <dbReference type="ChEBI" id="CHEBI:30013"/>
        <dbReference type="ChEBI" id="CHEBI:30616"/>
        <dbReference type="ChEBI" id="CHEBI:61977"/>
        <dbReference type="ChEBI" id="CHEBI:456216"/>
        <dbReference type="EC" id="2.7.11.1"/>
    </reaction>
    <physiologicalReaction direction="left-to-right" evidence="2">
        <dbReference type="Rhea" id="RHEA:46609"/>
    </physiologicalReaction>
</comment>
<comment type="cofactor">
    <cofactor evidence="1">
        <name>Mg(2+)</name>
        <dbReference type="ChEBI" id="CHEBI:18420"/>
    </cofactor>
</comment>
<comment type="activity regulation">
    <text evidence="1">The C-terminal non-catalytic region inhibits the kinase activity, the enzyme is activated by caspase-cleavage. Homodimerization and autophosphorylation of Thr-182 is also required for full activation (By similarity).</text>
</comment>
<comment type="subunit">
    <text evidence="1">Homodimer; mediated via the coiled-coil region.</text>
</comment>
<comment type="subcellular location">
    <subcellularLocation>
        <location evidence="1">Cytoplasm</location>
    </subcellularLocation>
    <subcellularLocation>
        <location evidence="1">Nucleus</location>
    </subcellularLocation>
    <text evidence="1">The caspase-cleaved form cycles between nucleus and cytoplasm.</text>
</comment>
<comment type="PTM">
    <text evidence="1">Proteolytically cleaved by caspase-3 during apoptosis at Asp-325 resulting in a 37 kDa form. Proteolytic cleavage results in kinase activation and nuclear translocation of the truncated form (MST1/N) (By similarity).</text>
</comment>
<comment type="similarity">
    <text evidence="8">Belongs to the protein kinase superfamily. STE Ser/Thr protein kinase family. STE20 subfamily.</text>
</comment>
<name>STK4_CHICK</name>
<organism>
    <name type="scientific">Gallus gallus</name>
    <name type="common">Chicken</name>
    <dbReference type="NCBI Taxonomy" id="9031"/>
    <lineage>
        <taxon>Eukaryota</taxon>
        <taxon>Metazoa</taxon>
        <taxon>Chordata</taxon>
        <taxon>Craniata</taxon>
        <taxon>Vertebrata</taxon>
        <taxon>Euteleostomi</taxon>
        <taxon>Archelosauria</taxon>
        <taxon>Archosauria</taxon>
        <taxon>Dinosauria</taxon>
        <taxon>Saurischia</taxon>
        <taxon>Theropoda</taxon>
        <taxon>Coelurosauria</taxon>
        <taxon>Aves</taxon>
        <taxon>Neognathae</taxon>
        <taxon>Galloanserae</taxon>
        <taxon>Galliformes</taxon>
        <taxon>Phasianidae</taxon>
        <taxon>Phasianinae</taxon>
        <taxon>Gallus</taxon>
    </lineage>
</organism>
<reference key="1">
    <citation type="journal article" date="2005" name="Genome Biol.">
        <title>Full-length cDNAs from chicken bursal lymphocytes to facilitate gene function analysis.</title>
        <authorList>
            <person name="Caldwell R.B."/>
            <person name="Kierzek A.M."/>
            <person name="Arakawa H."/>
            <person name="Bezzubov Y."/>
            <person name="Zaim J."/>
            <person name="Fiedler P."/>
            <person name="Kutter S."/>
            <person name="Blagodatski A."/>
            <person name="Kostovska D."/>
            <person name="Koter M."/>
            <person name="Plachy J."/>
            <person name="Carninci P."/>
            <person name="Hayashizaki Y."/>
            <person name="Buerstedde J.-M."/>
        </authorList>
    </citation>
    <scope>NUCLEOTIDE SEQUENCE [LARGE SCALE MRNA]</scope>
    <source>
        <strain>CB</strain>
        <tissue>Bursa of Fabricius</tissue>
    </source>
</reference>
<evidence type="ECO:0000250" key="1"/>
<evidence type="ECO:0000250" key="2">
    <source>
        <dbReference type="UniProtKB" id="Q13043"/>
    </source>
</evidence>
<evidence type="ECO:0000250" key="3">
    <source>
        <dbReference type="UniProtKB" id="Q9JI11"/>
    </source>
</evidence>
<evidence type="ECO:0000255" key="4"/>
<evidence type="ECO:0000255" key="5">
    <source>
        <dbReference type="PROSITE-ProRule" id="PRU00159"/>
    </source>
</evidence>
<evidence type="ECO:0000255" key="6">
    <source>
        <dbReference type="PROSITE-ProRule" id="PRU00310"/>
    </source>
</evidence>
<evidence type="ECO:0000256" key="7">
    <source>
        <dbReference type="SAM" id="MobiDB-lite"/>
    </source>
</evidence>
<evidence type="ECO:0000305" key="8"/>
<protein>
    <recommendedName>
        <fullName>Serine/threonine-protein kinase 4</fullName>
        <ecNumber>2.7.11.1</ecNumber>
    </recommendedName>
    <component>
        <recommendedName>
            <fullName>Serine/threonine-protein kinase 4 37kDa subunit</fullName>
            <shortName>MST1/N</shortName>
        </recommendedName>
    </component>
    <component>
        <recommendedName>
            <fullName>Serine/threonine-protein kinase 4 18kDa subunit</fullName>
            <shortName>MST1/C</shortName>
        </recommendedName>
    </component>
</protein>
<gene>
    <name type="primary">STK4</name>
    <name type="ORF">RCJMB04_17i1</name>
</gene>
<feature type="chain" id="PRO_0000246628" description="Serine/threonine-protein kinase 4">
    <location>
        <begin position="1"/>
        <end position="486"/>
    </location>
</feature>
<feature type="chain" id="PRO_0000413747" description="Serine/threonine-protein kinase 4 37kDa subunit" evidence="1">
    <location>
        <begin position="1"/>
        <end position="325"/>
    </location>
</feature>
<feature type="chain" id="PRO_0000413748" description="Serine/threonine-protein kinase 4 18kDa subunit" evidence="1">
    <location>
        <begin position="326"/>
        <end position="486"/>
    </location>
</feature>
<feature type="domain" description="Protein kinase" evidence="5">
    <location>
        <begin position="29"/>
        <end position="280"/>
    </location>
</feature>
<feature type="domain" description="SARAH" evidence="6">
    <location>
        <begin position="432"/>
        <end position="479"/>
    </location>
</feature>
<feature type="region of interest" description="Disordered" evidence="7">
    <location>
        <begin position="305"/>
        <end position="332"/>
    </location>
</feature>
<feature type="coiled-coil region" evidence="4">
    <location>
        <begin position="288"/>
        <end position="324"/>
    </location>
</feature>
<feature type="compositionally biased region" description="Acidic residues" evidence="7">
    <location>
        <begin position="312"/>
        <end position="325"/>
    </location>
</feature>
<feature type="active site" description="Proton acceptor" evidence="5">
    <location>
        <position position="148"/>
    </location>
</feature>
<feature type="binding site" evidence="5">
    <location>
        <begin position="35"/>
        <end position="43"/>
    </location>
    <ligand>
        <name>ATP</name>
        <dbReference type="ChEBI" id="CHEBI:30616"/>
    </ligand>
</feature>
<feature type="binding site" evidence="5">
    <location>
        <position position="58"/>
    </location>
    <ligand>
        <name>ATP</name>
        <dbReference type="ChEBI" id="CHEBI:30616"/>
    </ligand>
</feature>
<feature type="site" description="Cleavage; by caspase-3" evidence="1">
    <location>
        <begin position="325"/>
        <end position="326"/>
    </location>
</feature>
<feature type="modified residue" description="Phosphothreonine; by autocatalysis" evidence="1">
    <location>
        <position position="182"/>
    </location>
</feature>
<accession>Q5ZJK4</accession>
<keyword id="KW-0053">Apoptosis</keyword>
<keyword id="KW-0067">ATP-binding</keyword>
<keyword id="KW-0175">Coiled coil</keyword>
<keyword id="KW-0963">Cytoplasm</keyword>
<keyword id="KW-0418">Kinase</keyword>
<keyword id="KW-0460">Magnesium</keyword>
<keyword id="KW-0479">Metal-binding</keyword>
<keyword id="KW-0547">Nucleotide-binding</keyword>
<keyword id="KW-0539">Nucleus</keyword>
<keyword id="KW-0597">Phosphoprotein</keyword>
<keyword id="KW-1185">Reference proteome</keyword>
<keyword id="KW-0723">Serine/threonine-protein kinase</keyword>
<keyword id="KW-0808">Transferase</keyword>
<sequence>METVQLRNPRRQLKKLDEDSLTKQPEEVFDVLEKLGEGSYGSVFKAIHKETGQVVAIKQVPVESDLQEIIKEISIMQQCDSPHVVKYYGSYFKNTDLWIVMEYCGAGSVSDIIRLRNKTLTEEEIATIVQSTLKGLEYLHFMRKIHRDIKAGNILLNTEGHAKLADFGVAGQLTDTMAKRNTVIGTPFWMAPGVIQEIGYNCVADIWSLGITAIEMAEGKPPYADIHPMRAIFMIPTNPPPTFRKPELWSDAFTDFVKQCLVKSPEQRATAIQLLQHPFVKSAKGASILRDLINEAMDIKLKRQEAQQRELDQEDEENSEEDETDSGTMVRASGDETGTIRVVNTMSDGANTMIEHDGTLESQLGTMVINTEDEEEEGTMKRRDETMQPARPSFLEYFEQKAKENQVNSFGKNVSGQTKNSSDWKVPQDGDYEFLKTWSVDELQRRLSALDPMMEQEIEEIRQKYQSKRQPILDAIEAKKRRQQNF</sequence>
<dbReference type="EC" id="2.7.11.1"/>
<dbReference type="EMBL" id="AJ720430">
    <property type="protein sequence ID" value="CAG32089.1"/>
    <property type="molecule type" value="mRNA"/>
</dbReference>
<dbReference type="RefSeq" id="NP_001026024.1">
    <property type="nucleotide sequence ID" value="NM_001030853.1"/>
</dbReference>
<dbReference type="SMR" id="Q5ZJK4"/>
<dbReference type="FunCoup" id="Q5ZJK4">
    <property type="interactions" value="2377"/>
</dbReference>
<dbReference type="STRING" id="9031.ENSGALP00000050899"/>
<dbReference type="PaxDb" id="9031-ENSGALP00000006511"/>
<dbReference type="GeneID" id="419187"/>
<dbReference type="KEGG" id="gga:419187"/>
<dbReference type="CTD" id="6789"/>
<dbReference type="VEuPathDB" id="HostDB:geneid_419187"/>
<dbReference type="eggNOG" id="KOG0574">
    <property type="taxonomic scope" value="Eukaryota"/>
</dbReference>
<dbReference type="InParanoid" id="Q5ZJK4"/>
<dbReference type="OrthoDB" id="8693905at2759"/>
<dbReference type="PhylomeDB" id="Q5ZJK4"/>
<dbReference type="PRO" id="PR:Q5ZJK4"/>
<dbReference type="Proteomes" id="UP000000539">
    <property type="component" value="Unassembled WGS sequence"/>
</dbReference>
<dbReference type="GO" id="GO:0005737">
    <property type="term" value="C:cytoplasm"/>
    <property type="evidence" value="ECO:0000250"/>
    <property type="project" value="UniProtKB"/>
</dbReference>
<dbReference type="GO" id="GO:0005634">
    <property type="term" value="C:nucleus"/>
    <property type="evidence" value="ECO:0000250"/>
    <property type="project" value="UniProtKB"/>
</dbReference>
<dbReference type="GO" id="GO:0005524">
    <property type="term" value="F:ATP binding"/>
    <property type="evidence" value="ECO:0007669"/>
    <property type="project" value="UniProtKB-KW"/>
</dbReference>
<dbReference type="GO" id="GO:0046872">
    <property type="term" value="F:metal ion binding"/>
    <property type="evidence" value="ECO:0007669"/>
    <property type="project" value="UniProtKB-KW"/>
</dbReference>
<dbReference type="GO" id="GO:0106310">
    <property type="term" value="F:protein serine kinase activity"/>
    <property type="evidence" value="ECO:0007669"/>
    <property type="project" value="RHEA"/>
</dbReference>
<dbReference type="GO" id="GO:0004674">
    <property type="term" value="F:protein serine/threonine kinase activity"/>
    <property type="evidence" value="ECO:0000250"/>
    <property type="project" value="UniProtKB"/>
</dbReference>
<dbReference type="GO" id="GO:0006915">
    <property type="term" value="P:apoptotic process"/>
    <property type="evidence" value="ECO:0000250"/>
    <property type="project" value="UniProtKB"/>
</dbReference>
<dbReference type="GO" id="GO:0035329">
    <property type="term" value="P:hippo signaling"/>
    <property type="evidence" value="ECO:0000250"/>
    <property type="project" value="UniProtKB"/>
</dbReference>
<dbReference type="GO" id="GO:0035556">
    <property type="term" value="P:intracellular signal transduction"/>
    <property type="evidence" value="ECO:0000318"/>
    <property type="project" value="GO_Central"/>
</dbReference>
<dbReference type="GO" id="GO:0090090">
    <property type="term" value="P:negative regulation of canonical Wnt signaling pathway"/>
    <property type="evidence" value="ECO:0000318"/>
    <property type="project" value="GO_Central"/>
</dbReference>
<dbReference type="GO" id="GO:0043065">
    <property type="term" value="P:positive regulation of apoptotic process"/>
    <property type="evidence" value="ECO:0000318"/>
    <property type="project" value="GO_Central"/>
</dbReference>
<dbReference type="GO" id="GO:0051262">
    <property type="term" value="P:protein tetramerization"/>
    <property type="evidence" value="ECO:0007669"/>
    <property type="project" value="InterPro"/>
</dbReference>
<dbReference type="GO" id="GO:0043408">
    <property type="term" value="P:regulation of MAPK cascade"/>
    <property type="evidence" value="ECO:0000318"/>
    <property type="project" value="GO_Central"/>
</dbReference>
<dbReference type="CDD" id="cd21887">
    <property type="entry name" value="SARAH_MST1"/>
    <property type="match status" value="1"/>
</dbReference>
<dbReference type="CDD" id="cd06612">
    <property type="entry name" value="STKc_MST1_2"/>
    <property type="match status" value="1"/>
</dbReference>
<dbReference type="FunFam" id="1.10.510.10:FF:000075">
    <property type="entry name" value="Serine/threonine-protein kinase 3"/>
    <property type="match status" value="1"/>
</dbReference>
<dbReference type="FunFam" id="3.30.200.20:FF:000410">
    <property type="entry name" value="Serine/threonine-protein kinase 3"/>
    <property type="match status" value="1"/>
</dbReference>
<dbReference type="FunFam" id="4.10.170.10:FF:000002">
    <property type="entry name" value="serine/threonine-protein kinase 3"/>
    <property type="match status" value="1"/>
</dbReference>
<dbReference type="FunFam" id="1.10.287.4270:FF:000004">
    <property type="entry name" value="Serine/threonine-protein kinase 3/4"/>
    <property type="match status" value="1"/>
</dbReference>
<dbReference type="FunFam" id="1.10.287.4270:FF:000002">
    <property type="entry name" value="Serine/threonine-protein kinase 4"/>
    <property type="match status" value="1"/>
</dbReference>
<dbReference type="Gene3D" id="1.10.287.4270">
    <property type="match status" value="1"/>
</dbReference>
<dbReference type="Gene3D" id="4.10.170.10">
    <property type="entry name" value="p53-like tetramerisation domain"/>
    <property type="match status" value="1"/>
</dbReference>
<dbReference type="Gene3D" id="1.10.510.10">
    <property type="entry name" value="Transferase(Phosphotransferase) domain 1"/>
    <property type="match status" value="1"/>
</dbReference>
<dbReference type="InterPro" id="IPR011009">
    <property type="entry name" value="Kinase-like_dom_sf"/>
</dbReference>
<dbReference type="InterPro" id="IPR024205">
    <property type="entry name" value="Mst1_2_SARAH_domain"/>
</dbReference>
<dbReference type="InterPro" id="IPR036674">
    <property type="entry name" value="p53_tetramer_sf"/>
</dbReference>
<dbReference type="InterPro" id="IPR000719">
    <property type="entry name" value="Prot_kinase_dom"/>
</dbReference>
<dbReference type="InterPro" id="IPR017441">
    <property type="entry name" value="Protein_kinase_ATP_BS"/>
</dbReference>
<dbReference type="InterPro" id="IPR011524">
    <property type="entry name" value="SARAH_dom"/>
</dbReference>
<dbReference type="InterPro" id="IPR050629">
    <property type="entry name" value="STE20/SPS1-PAK"/>
</dbReference>
<dbReference type="PANTHER" id="PTHR48012:SF2">
    <property type="entry name" value="STERILE20-LIKE KINASE, ISOFORM B"/>
    <property type="match status" value="1"/>
</dbReference>
<dbReference type="PANTHER" id="PTHR48012">
    <property type="entry name" value="STERILE20-LIKE KINASE, ISOFORM B-RELATED"/>
    <property type="match status" value="1"/>
</dbReference>
<dbReference type="Pfam" id="PF11629">
    <property type="entry name" value="Mst1_SARAH"/>
    <property type="match status" value="1"/>
</dbReference>
<dbReference type="Pfam" id="PF00069">
    <property type="entry name" value="Pkinase"/>
    <property type="match status" value="1"/>
</dbReference>
<dbReference type="SMART" id="SM00220">
    <property type="entry name" value="S_TKc"/>
    <property type="match status" value="1"/>
</dbReference>
<dbReference type="SUPFAM" id="SSF56112">
    <property type="entry name" value="Protein kinase-like (PK-like)"/>
    <property type="match status" value="1"/>
</dbReference>
<dbReference type="PROSITE" id="PS00107">
    <property type="entry name" value="PROTEIN_KINASE_ATP"/>
    <property type="match status" value="1"/>
</dbReference>
<dbReference type="PROSITE" id="PS50011">
    <property type="entry name" value="PROTEIN_KINASE_DOM"/>
    <property type="match status" value="1"/>
</dbReference>
<dbReference type="PROSITE" id="PS50951">
    <property type="entry name" value="SARAH"/>
    <property type="match status" value="1"/>
</dbReference>
<proteinExistence type="evidence at transcript level"/>